<dbReference type="EC" id="2.7.4.6" evidence="1"/>
<dbReference type="EMBL" id="CP000880">
    <property type="protein sequence ID" value="ABX20289.1"/>
    <property type="molecule type" value="Genomic_DNA"/>
</dbReference>
<dbReference type="SMR" id="A9MHL2"/>
<dbReference type="STRING" id="41514.SARI_00351"/>
<dbReference type="KEGG" id="ses:SARI_00351"/>
<dbReference type="HOGENOM" id="CLU_060216_8_1_6"/>
<dbReference type="Proteomes" id="UP000002084">
    <property type="component" value="Chromosome"/>
</dbReference>
<dbReference type="GO" id="GO:0005737">
    <property type="term" value="C:cytoplasm"/>
    <property type="evidence" value="ECO:0007669"/>
    <property type="project" value="UniProtKB-SubCell"/>
</dbReference>
<dbReference type="GO" id="GO:0005524">
    <property type="term" value="F:ATP binding"/>
    <property type="evidence" value="ECO:0007669"/>
    <property type="project" value="UniProtKB-UniRule"/>
</dbReference>
<dbReference type="GO" id="GO:0046872">
    <property type="term" value="F:metal ion binding"/>
    <property type="evidence" value="ECO:0007669"/>
    <property type="project" value="UniProtKB-KW"/>
</dbReference>
<dbReference type="GO" id="GO:0004550">
    <property type="term" value="F:nucleoside diphosphate kinase activity"/>
    <property type="evidence" value="ECO:0007669"/>
    <property type="project" value="UniProtKB-UniRule"/>
</dbReference>
<dbReference type="GO" id="GO:0006241">
    <property type="term" value="P:CTP biosynthetic process"/>
    <property type="evidence" value="ECO:0007669"/>
    <property type="project" value="UniProtKB-UniRule"/>
</dbReference>
<dbReference type="GO" id="GO:0006183">
    <property type="term" value="P:GTP biosynthetic process"/>
    <property type="evidence" value="ECO:0007669"/>
    <property type="project" value="UniProtKB-UniRule"/>
</dbReference>
<dbReference type="GO" id="GO:0006228">
    <property type="term" value="P:UTP biosynthetic process"/>
    <property type="evidence" value="ECO:0007669"/>
    <property type="project" value="UniProtKB-UniRule"/>
</dbReference>
<dbReference type="CDD" id="cd04413">
    <property type="entry name" value="NDPk_I"/>
    <property type="match status" value="1"/>
</dbReference>
<dbReference type="FunFam" id="3.30.70.141:FF:000001">
    <property type="entry name" value="Nucleoside diphosphate kinase"/>
    <property type="match status" value="1"/>
</dbReference>
<dbReference type="Gene3D" id="3.30.70.141">
    <property type="entry name" value="Nucleoside diphosphate kinase-like domain"/>
    <property type="match status" value="1"/>
</dbReference>
<dbReference type="HAMAP" id="MF_00451">
    <property type="entry name" value="NDP_kinase"/>
    <property type="match status" value="1"/>
</dbReference>
<dbReference type="InterPro" id="IPR034907">
    <property type="entry name" value="NDK-like_dom"/>
</dbReference>
<dbReference type="InterPro" id="IPR036850">
    <property type="entry name" value="NDK-like_dom_sf"/>
</dbReference>
<dbReference type="InterPro" id="IPR001564">
    <property type="entry name" value="Nucleoside_diP_kinase"/>
</dbReference>
<dbReference type="InterPro" id="IPR023005">
    <property type="entry name" value="Nucleoside_diP_kinase_AS"/>
</dbReference>
<dbReference type="NCBIfam" id="NF001908">
    <property type="entry name" value="PRK00668.1"/>
    <property type="match status" value="1"/>
</dbReference>
<dbReference type="PANTHER" id="PTHR46161">
    <property type="entry name" value="NUCLEOSIDE DIPHOSPHATE KINASE"/>
    <property type="match status" value="1"/>
</dbReference>
<dbReference type="PANTHER" id="PTHR46161:SF3">
    <property type="entry name" value="NUCLEOSIDE DIPHOSPHATE KINASE DDB_G0292928-RELATED"/>
    <property type="match status" value="1"/>
</dbReference>
<dbReference type="Pfam" id="PF00334">
    <property type="entry name" value="NDK"/>
    <property type="match status" value="1"/>
</dbReference>
<dbReference type="PRINTS" id="PR01243">
    <property type="entry name" value="NUCDPKINASE"/>
</dbReference>
<dbReference type="SMART" id="SM00562">
    <property type="entry name" value="NDK"/>
    <property type="match status" value="1"/>
</dbReference>
<dbReference type="SUPFAM" id="SSF54919">
    <property type="entry name" value="Nucleoside diphosphate kinase, NDK"/>
    <property type="match status" value="1"/>
</dbReference>
<dbReference type="PROSITE" id="PS00469">
    <property type="entry name" value="NDPK"/>
    <property type="match status" value="1"/>
</dbReference>
<dbReference type="PROSITE" id="PS51374">
    <property type="entry name" value="NDPK_LIKE"/>
    <property type="match status" value="1"/>
</dbReference>
<protein>
    <recommendedName>
        <fullName evidence="1">Nucleoside diphosphate kinase</fullName>
        <shortName evidence="1">NDK</shortName>
        <shortName evidence="1">NDP kinase</shortName>
        <ecNumber evidence="1">2.7.4.6</ecNumber>
    </recommendedName>
    <alternativeName>
        <fullName evidence="1">Nucleoside-2-P kinase</fullName>
    </alternativeName>
</protein>
<keyword id="KW-0067">ATP-binding</keyword>
<keyword id="KW-0963">Cytoplasm</keyword>
<keyword id="KW-0418">Kinase</keyword>
<keyword id="KW-0460">Magnesium</keyword>
<keyword id="KW-0479">Metal-binding</keyword>
<keyword id="KW-0546">Nucleotide metabolism</keyword>
<keyword id="KW-0547">Nucleotide-binding</keyword>
<keyword id="KW-0597">Phosphoprotein</keyword>
<keyword id="KW-1185">Reference proteome</keyword>
<keyword id="KW-0808">Transferase</keyword>
<evidence type="ECO:0000255" key="1">
    <source>
        <dbReference type="HAMAP-Rule" id="MF_00451"/>
    </source>
</evidence>
<sequence>MAIERTFSIIKPNAVAKNVIGSIFARFEAAGFRIVGTRMLHLTVEQARGFYAEHDGKPFFDGLVEFMTSGPIVVSVLESENAVQRHRDLLGATNPANALAGTLRADYADSFTENGTHGSDSLESAQREIAFFFGEGEVCPRTR</sequence>
<feature type="chain" id="PRO_1000080976" description="Nucleoside diphosphate kinase">
    <location>
        <begin position="1"/>
        <end position="143"/>
    </location>
</feature>
<feature type="active site" description="Pros-phosphohistidine intermediate" evidence="1">
    <location>
        <position position="117"/>
    </location>
</feature>
<feature type="binding site" evidence="1">
    <location>
        <position position="11"/>
    </location>
    <ligand>
        <name>ATP</name>
        <dbReference type="ChEBI" id="CHEBI:30616"/>
    </ligand>
</feature>
<feature type="binding site" evidence="1">
    <location>
        <position position="59"/>
    </location>
    <ligand>
        <name>ATP</name>
        <dbReference type="ChEBI" id="CHEBI:30616"/>
    </ligand>
</feature>
<feature type="binding site" evidence="1">
    <location>
        <position position="87"/>
    </location>
    <ligand>
        <name>ATP</name>
        <dbReference type="ChEBI" id="CHEBI:30616"/>
    </ligand>
</feature>
<feature type="binding site" evidence="1">
    <location>
        <position position="93"/>
    </location>
    <ligand>
        <name>ATP</name>
        <dbReference type="ChEBI" id="CHEBI:30616"/>
    </ligand>
</feature>
<feature type="binding site" evidence="1">
    <location>
        <position position="104"/>
    </location>
    <ligand>
        <name>ATP</name>
        <dbReference type="ChEBI" id="CHEBI:30616"/>
    </ligand>
</feature>
<feature type="binding site" evidence="1">
    <location>
        <position position="114"/>
    </location>
    <ligand>
        <name>ATP</name>
        <dbReference type="ChEBI" id="CHEBI:30616"/>
    </ligand>
</feature>
<organism>
    <name type="scientific">Salmonella arizonae (strain ATCC BAA-731 / CDC346-86 / RSK2980)</name>
    <dbReference type="NCBI Taxonomy" id="41514"/>
    <lineage>
        <taxon>Bacteria</taxon>
        <taxon>Pseudomonadati</taxon>
        <taxon>Pseudomonadota</taxon>
        <taxon>Gammaproteobacteria</taxon>
        <taxon>Enterobacterales</taxon>
        <taxon>Enterobacteriaceae</taxon>
        <taxon>Salmonella</taxon>
    </lineage>
</organism>
<proteinExistence type="inferred from homology"/>
<reference key="1">
    <citation type="submission" date="2007-11" db="EMBL/GenBank/DDBJ databases">
        <authorList>
            <consortium name="The Salmonella enterica serovar Arizonae Genome Sequencing Project"/>
            <person name="McClelland M."/>
            <person name="Sanderson E.K."/>
            <person name="Porwollik S."/>
            <person name="Spieth J."/>
            <person name="Clifton W.S."/>
            <person name="Fulton R."/>
            <person name="Chunyan W."/>
            <person name="Wollam A."/>
            <person name="Shah N."/>
            <person name="Pepin K."/>
            <person name="Bhonagiri V."/>
            <person name="Nash W."/>
            <person name="Johnson M."/>
            <person name="Thiruvilangam P."/>
            <person name="Wilson R."/>
        </authorList>
    </citation>
    <scope>NUCLEOTIDE SEQUENCE [LARGE SCALE GENOMIC DNA]</scope>
    <source>
        <strain>ATCC BAA-731 / CDC346-86 / RSK2980</strain>
    </source>
</reference>
<comment type="function">
    <text evidence="1">Major role in the synthesis of nucleoside triphosphates other than ATP. The ATP gamma phosphate is transferred to the NDP beta phosphate via a ping-pong mechanism, using a phosphorylated active-site intermediate.</text>
</comment>
<comment type="catalytic activity">
    <reaction evidence="1">
        <text>a 2'-deoxyribonucleoside 5'-diphosphate + ATP = a 2'-deoxyribonucleoside 5'-triphosphate + ADP</text>
        <dbReference type="Rhea" id="RHEA:44640"/>
        <dbReference type="ChEBI" id="CHEBI:30616"/>
        <dbReference type="ChEBI" id="CHEBI:61560"/>
        <dbReference type="ChEBI" id="CHEBI:73316"/>
        <dbReference type="ChEBI" id="CHEBI:456216"/>
        <dbReference type="EC" id="2.7.4.6"/>
    </reaction>
</comment>
<comment type="catalytic activity">
    <reaction evidence="1">
        <text>a ribonucleoside 5'-diphosphate + ATP = a ribonucleoside 5'-triphosphate + ADP</text>
        <dbReference type="Rhea" id="RHEA:18113"/>
        <dbReference type="ChEBI" id="CHEBI:30616"/>
        <dbReference type="ChEBI" id="CHEBI:57930"/>
        <dbReference type="ChEBI" id="CHEBI:61557"/>
        <dbReference type="ChEBI" id="CHEBI:456216"/>
        <dbReference type="EC" id="2.7.4.6"/>
    </reaction>
</comment>
<comment type="cofactor">
    <cofactor evidence="1">
        <name>Mg(2+)</name>
        <dbReference type="ChEBI" id="CHEBI:18420"/>
    </cofactor>
</comment>
<comment type="subunit">
    <text evidence="1">Homotetramer.</text>
</comment>
<comment type="subcellular location">
    <subcellularLocation>
        <location evidence="1">Cytoplasm</location>
    </subcellularLocation>
</comment>
<comment type="similarity">
    <text evidence="1">Belongs to the NDK family.</text>
</comment>
<accession>A9MHL2</accession>
<gene>
    <name evidence="1" type="primary">ndk</name>
    <name type="ordered locus">SARI_00351</name>
</gene>
<name>NDK_SALAR</name>